<feature type="chain" id="PRO_0000442385" description="Cytochrome P450 monooxygenase ATR3">
    <location>
        <begin position="1"/>
        <end position="478"/>
    </location>
</feature>
<feature type="transmembrane region" description="Helical" evidence="3">
    <location>
        <begin position="20"/>
        <end position="42"/>
    </location>
</feature>
<feature type="glycosylation site" description="N-linked (GlcNAc...) asparagine" evidence="4">
    <location>
        <position position="159"/>
    </location>
</feature>
<feature type="glycosylation site" description="N-linked (GlcNAc...) asparagine" evidence="4">
    <location>
        <position position="268"/>
    </location>
</feature>
<accession>A0A084R1J1</accession>
<keyword id="KW-0325">Glycoprotein</keyword>
<keyword id="KW-0349">Heme</keyword>
<keyword id="KW-0408">Iron</keyword>
<keyword id="KW-0472">Membrane</keyword>
<keyword id="KW-0479">Metal-binding</keyword>
<keyword id="KW-0503">Monooxygenase</keyword>
<keyword id="KW-0560">Oxidoreductase</keyword>
<keyword id="KW-1185">Reference proteome</keyword>
<keyword id="KW-0812">Transmembrane</keyword>
<keyword id="KW-1133">Transmembrane helix</keyword>
<protein>
    <recommendedName>
        <fullName evidence="5">Cytochrome P450 monooxygenase ATR3</fullName>
        <ecNumber evidence="7">1.-.-.-</ecNumber>
    </recommendedName>
    <alternativeName>
        <fullName evidence="5">Core atranone cluster (CAC) protein 3</fullName>
    </alternativeName>
</protein>
<dbReference type="EC" id="1.-.-.-" evidence="7"/>
<dbReference type="EMBL" id="KL659308">
    <property type="protein sequence ID" value="KFA70076.1"/>
    <property type="molecule type" value="Genomic_DNA"/>
</dbReference>
<dbReference type="SMR" id="A0A084R1J1"/>
<dbReference type="STRING" id="1283841.A0A084R1J1"/>
<dbReference type="GlyCosmos" id="A0A084R1J1">
    <property type="glycosylation" value="2 sites, No reported glycans"/>
</dbReference>
<dbReference type="HOGENOM" id="CLU_022195_1_0_1"/>
<dbReference type="InParanoid" id="A0A084R1J1"/>
<dbReference type="OMA" id="KECNGTI"/>
<dbReference type="OrthoDB" id="1844152at2759"/>
<dbReference type="Proteomes" id="UP000028524">
    <property type="component" value="Unassembled WGS sequence"/>
</dbReference>
<dbReference type="GO" id="GO:0016020">
    <property type="term" value="C:membrane"/>
    <property type="evidence" value="ECO:0007669"/>
    <property type="project" value="UniProtKB-SubCell"/>
</dbReference>
<dbReference type="GO" id="GO:0020037">
    <property type="term" value="F:heme binding"/>
    <property type="evidence" value="ECO:0007669"/>
    <property type="project" value="InterPro"/>
</dbReference>
<dbReference type="GO" id="GO:0005506">
    <property type="term" value="F:iron ion binding"/>
    <property type="evidence" value="ECO:0007669"/>
    <property type="project" value="InterPro"/>
</dbReference>
<dbReference type="GO" id="GO:0004497">
    <property type="term" value="F:monooxygenase activity"/>
    <property type="evidence" value="ECO:0007669"/>
    <property type="project" value="UniProtKB-KW"/>
</dbReference>
<dbReference type="GO" id="GO:0016705">
    <property type="term" value="F:oxidoreductase activity, acting on paired donors, with incorporation or reduction of molecular oxygen"/>
    <property type="evidence" value="ECO:0007669"/>
    <property type="project" value="InterPro"/>
</dbReference>
<dbReference type="GO" id="GO:0019748">
    <property type="term" value="P:secondary metabolic process"/>
    <property type="evidence" value="ECO:0007669"/>
    <property type="project" value="UniProtKB-ARBA"/>
</dbReference>
<dbReference type="CDD" id="cd11041">
    <property type="entry name" value="CYP503A1-like"/>
    <property type="match status" value="1"/>
</dbReference>
<dbReference type="Gene3D" id="1.10.630.10">
    <property type="entry name" value="Cytochrome P450"/>
    <property type="match status" value="1"/>
</dbReference>
<dbReference type="InterPro" id="IPR001128">
    <property type="entry name" value="Cyt_P450"/>
</dbReference>
<dbReference type="InterPro" id="IPR017972">
    <property type="entry name" value="Cyt_P450_CS"/>
</dbReference>
<dbReference type="InterPro" id="IPR002403">
    <property type="entry name" value="Cyt_P450_E_grp-IV"/>
</dbReference>
<dbReference type="InterPro" id="IPR036396">
    <property type="entry name" value="Cyt_P450_sf"/>
</dbReference>
<dbReference type="PANTHER" id="PTHR46206">
    <property type="entry name" value="CYTOCHROME P450"/>
    <property type="match status" value="1"/>
</dbReference>
<dbReference type="PANTHER" id="PTHR46206:SF7">
    <property type="entry name" value="P450, PUTATIVE (EUROFUNG)-RELATED"/>
    <property type="match status" value="1"/>
</dbReference>
<dbReference type="Pfam" id="PF00067">
    <property type="entry name" value="p450"/>
    <property type="match status" value="1"/>
</dbReference>
<dbReference type="PRINTS" id="PR00465">
    <property type="entry name" value="EP450IV"/>
</dbReference>
<dbReference type="SUPFAM" id="SSF48264">
    <property type="entry name" value="Cytochrome P450"/>
    <property type="match status" value="1"/>
</dbReference>
<dbReference type="PROSITE" id="PS00086">
    <property type="entry name" value="CYTOCHROME_P450"/>
    <property type="match status" value="1"/>
</dbReference>
<name>ATR3_STAC4</name>
<sequence>METLSQRITSMESVQLQGIAVAFVTASALYYVLPAAISHIQLSALPMLGKTEVVVIPPKLLSELSKSPRTLSAEIAGNEFIAGKYTKVKALTPILLHSITKYLIPSLGRNAVVMSEEVSNAVRLGIPTCNDWTGVNIYPKIMRMVTVSTGRFLVGSELNRSEDYIDTVHNYALDVSSAQSAVHKMHPWIRPLLAEWLPEIRRLRKRTEEAFALFESLIKERMKMQRELSESELPDDLLQWMIANRHNYNNEDAHDLVYSQLGLTFTANHSTASTITNALYTLATMGDLIDVIRDDITQALAESGGQFTSKALDSMWKFDSFIKETVRMNPLVMSVAVRKVVEPIKLPSGQVIPTGVTLETPLVAVNLDDQIFPNADVFDPMRFYNLREKDRKQGDAREAEFNQLISSSTSHMSWGFGKHTCPGRAFAAQQIKMILAHIILRYDIKLVGDSTDRYENIPKGHLSLPDPTKDILMKRREI</sequence>
<comment type="function">
    <text evidence="2 7">Cytochrome P450 monooxygenase; part of the core atranone cluster (CAC) which products are predicted to catalyze most or all steps of mycotoxin atranone synthesis, starting from geranylgeranyl pyrophosphate (GGPP) (PubMed:25015739). The initial cyclization of GGPP to dolabellane is probably performed by the terpene cyclase ATR13 (PubMed:25015739). The Baeyer-Villiger oxidation near the end of the atranone synthesis, which converts atranones D and E to atranones F and G is predicted to be catalyzed by the monooxygenase ATR8 (PubMed:25015739). Of the CAC's other predicted gene products, the reducing PKS ATR6 might synthesize a polyketide chain (PubMed:25015739). This polyketide is probably transferred onto the atranone backbone by the polyketide transferase ATR5 (By similarity). Other predicted CAC products include 4 oxygenases (ATR2, ATR3, ATR4, and ATR14), 3 short-chain reductases (ATR7, ATR9, and ATR10), and a methyltransferase (ATR12) (PubMed:25015739). These may all be involved in the various steps of atranone biosynthesis, although their specific roles must await experimental determination (PubMed:25015739).</text>
</comment>
<comment type="cofactor">
    <cofactor evidence="1">
        <name>heme</name>
        <dbReference type="ChEBI" id="CHEBI:30413"/>
    </cofactor>
</comment>
<comment type="pathway">
    <text evidence="7">Mycotoxin biosynthesis.</text>
</comment>
<comment type="subcellular location">
    <subcellularLocation>
        <location evidence="3">Membrane</location>
        <topology evidence="3">Single-pass membrane protein</topology>
    </subcellularLocation>
</comment>
<comment type="similarity">
    <text evidence="6">Belongs to the cytochrome P450 family.</text>
</comment>
<reference key="1">
    <citation type="journal article" date="2014" name="BMC Genomics">
        <title>Comparative genome sequencing reveals chemotype-specific gene clusters in the toxigenic black mold Stachybotrys.</title>
        <authorList>
            <person name="Semeiks J."/>
            <person name="Borek D."/>
            <person name="Otwinowski Z."/>
            <person name="Grishin N.V."/>
        </authorList>
    </citation>
    <scope>NUCLEOTIDE SEQUENCE [LARGE SCALE GENOMIC DNA]</scope>
    <scope>IDENTIFICATION</scope>
    <scope>FUNCTION</scope>
    <source>
        <strain>IBT 40285</strain>
    </source>
</reference>
<organism>
    <name type="scientific">Stachybotrys chlorohalonatus (strain IBT 40285)</name>
    <dbReference type="NCBI Taxonomy" id="1283841"/>
    <lineage>
        <taxon>Eukaryota</taxon>
        <taxon>Fungi</taxon>
        <taxon>Dikarya</taxon>
        <taxon>Ascomycota</taxon>
        <taxon>Pezizomycotina</taxon>
        <taxon>Sordariomycetes</taxon>
        <taxon>Hypocreomycetidae</taxon>
        <taxon>Hypocreales</taxon>
        <taxon>Stachybotryaceae</taxon>
        <taxon>Stachybotrys</taxon>
    </lineage>
</organism>
<gene>
    <name evidence="5" type="primary">ATR3</name>
    <name type="ORF">S40285_03328</name>
</gene>
<evidence type="ECO:0000250" key="1">
    <source>
        <dbReference type="UniProtKB" id="P04798"/>
    </source>
</evidence>
<evidence type="ECO:0000250" key="2">
    <source>
        <dbReference type="UniProtKB" id="Q4WAY4"/>
    </source>
</evidence>
<evidence type="ECO:0000255" key="3"/>
<evidence type="ECO:0000255" key="4">
    <source>
        <dbReference type="PROSITE-ProRule" id="PRU00498"/>
    </source>
</evidence>
<evidence type="ECO:0000303" key="5">
    <source>
    </source>
</evidence>
<evidence type="ECO:0000305" key="6"/>
<evidence type="ECO:0000305" key="7">
    <source>
    </source>
</evidence>
<proteinExistence type="inferred from homology"/>